<protein>
    <recommendedName>
        <fullName evidence="1">Serine--tRNA ligase</fullName>
        <ecNumber evidence="1">6.1.1.11</ecNumber>
    </recommendedName>
    <alternativeName>
        <fullName evidence="1">Seryl-tRNA synthetase</fullName>
        <shortName evidence="1">SerRS</shortName>
    </alternativeName>
    <alternativeName>
        <fullName evidence="1">Seryl-tRNA(Ser/Sec) synthetase</fullName>
    </alternativeName>
</protein>
<accession>Q7MLV2</accession>
<sequence>MLDSKLLRTELDETAAKLARRGFKLDVETIGKLEEQRKSIQVEVENLQSTRNSISKQIGQLMSAGDKEGAEKIKQQIGSLGSDLDVKKIELDAVMAQLDDIILSVPNIPADEVPNGKDENDNLEISRWGEPKSYDFELKDHVDLGEMGDGLDFASAVKITGARFIVMKGQFARLHRAIAQFMLDLHTEEHGYTEMYVPYLVNADSLFGTGQLPKFGKDLFHTEPLTEKASDEEPRKLSLIPTAEVPVTNLVRDTISDEADLPLKMTAHTPCFRSEAGSYGRDTRGLIRMHQFDKVELVQITKPEDSMNALEELTGHAEKVLQLLELPYRKVLLCTGDMGFGSHKTYDLEVWVPAQNTYREISSCSNMWDFQARRMQARFRRKGEKKPELVHTLNGSGLAVGRTMVAILENNQEADGRIAIPTVLQKYMGGATHIG</sequence>
<name>SYS_VIBVY</name>
<comment type="function">
    <text evidence="1">Catalyzes the attachment of serine to tRNA(Ser). Is also able to aminoacylate tRNA(Sec) with serine, to form the misacylated tRNA L-seryl-tRNA(Sec), which will be further converted into selenocysteinyl-tRNA(Sec).</text>
</comment>
<comment type="catalytic activity">
    <reaction evidence="1">
        <text>tRNA(Ser) + L-serine + ATP = L-seryl-tRNA(Ser) + AMP + diphosphate + H(+)</text>
        <dbReference type="Rhea" id="RHEA:12292"/>
        <dbReference type="Rhea" id="RHEA-COMP:9669"/>
        <dbReference type="Rhea" id="RHEA-COMP:9703"/>
        <dbReference type="ChEBI" id="CHEBI:15378"/>
        <dbReference type="ChEBI" id="CHEBI:30616"/>
        <dbReference type="ChEBI" id="CHEBI:33019"/>
        <dbReference type="ChEBI" id="CHEBI:33384"/>
        <dbReference type="ChEBI" id="CHEBI:78442"/>
        <dbReference type="ChEBI" id="CHEBI:78533"/>
        <dbReference type="ChEBI" id="CHEBI:456215"/>
        <dbReference type="EC" id="6.1.1.11"/>
    </reaction>
</comment>
<comment type="catalytic activity">
    <reaction evidence="1">
        <text>tRNA(Sec) + L-serine + ATP = L-seryl-tRNA(Sec) + AMP + diphosphate + H(+)</text>
        <dbReference type="Rhea" id="RHEA:42580"/>
        <dbReference type="Rhea" id="RHEA-COMP:9742"/>
        <dbReference type="Rhea" id="RHEA-COMP:10128"/>
        <dbReference type="ChEBI" id="CHEBI:15378"/>
        <dbReference type="ChEBI" id="CHEBI:30616"/>
        <dbReference type="ChEBI" id="CHEBI:33019"/>
        <dbReference type="ChEBI" id="CHEBI:33384"/>
        <dbReference type="ChEBI" id="CHEBI:78442"/>
        <dbReference type="ChEBI" id="CHEBI:78533"/>
        <dbReference type="ChEBI" id="CHEBI:456215"/>
        <dbReference type="EC" id="6.1.1.11"/>
    </reaction>
</comment>
<comment type="pathway">
    <text evidence="1">Aminoacyl-tRNA biosynthesis; selenocysteinyl-tRNA(Sec) biosynthesis; L-seryl-tRNA(Sec) from L-serine and tRNA(Sec): step 1/1.</text>
</comment>
<comment type="subunit">
    <text evidence="1">Homodimer. The tRNA molecule binds across the dimer.</text>
</comment>
<comment type="subcellular location">
    <subcellularLocation>
        <location evidence="1">Cytoplasm</location>
    </subcellularLocation>
</comment>
<comment type="domain">
    <text evidence="1">Consists of two distinct domains, a catalytic core and a N-terminal extension that is involved in tRNA binding.</text>
</comment>
<comment type="similarity">
    <text evidence="1">Belongs to the class-II aminoacyl-tRNA synthetase family. Type-1 seryl-tRNA synthetase subfamily.</text>
</comment>
<comment type="sequence caution" evidence="2">
    <conflict type="erroneous initiation">
        <sequence resource="EMBL-CDS" id="BAC94089"/>
    </conflict>
</comment>
<dbReference type="EC" id="6.1.1.11" evidence="1"/>
<dbReference type="EMBL" id="BA000037">
    <property type="protein sequence ID" value="BAC94089.1"/>
    <property type="status" value="ALT_INIT"/>
    <property type="molecule type" value="Genomic_DNA"/>
</dbReference>
<dbReference type="RefSeq" id="WP_011150001.1">
    <property type="nucleotide sequence ID" value="NC_005139.1"/>
</dbReference>
<dbReference type="SMR" id="Q7MLV2"/>
<dbReference type="STRING" id="672.VV93_v1c12390"/>
<dbReference type="KEGG" id="vvy:VV1325"/>
<dbReference type="PATRIC" id="fig|196600.6.peg.1315"/>
<dbReference type="eggNOG" id="COG0172">
    <property type="taxonomic scope" value="Bacteria"/>
</dbReference>
<dbReference type="HOGENOM" id="CLU_023797_1_1_6"/>
<dbReference type="UniPathway" id="UPA00906">
    <property type="reaction ID" value="UER00895"/>
</dbReference>
<dbReference type="Proteomes" id="UP000002675">
    <property type="component" value="Chromosome I"/>
</dbReference>
<dbReference type="GO" id="GO:0005737">
    <property type="term" value="C:cytoplasm"/>
    <property type="evidence" value="ECO:0007669"/>
    <property type="project" value="UniProtKB-SubCell"/>
</dbReference>
<dbReference type="GO" id="GO:0005524">
    <property type="term" value="F:ATP binding"/>
    <property type="evidence" value="ECO:0007669"/>
    <property type="project" value="UniProtKB-UniRule"/>
</dbReference>
<dbReference type="GO" id="GO:0004828">
    <property type="term" value="F:serine-tRNA ligase activity"/>
    <property type="evidence" value="ECO:0007669"/>
    <property type="project" value="UniProtKB-UniRule"/>
</dbReference>
<dbReference type="GO" id="GO:0016260">
    <property type="term" value="P:selenocysteine biosynthetic process"/>
    <property type="evidence" value="ECO:0007669"/>
    <property type="project" value="UniProtKB-UniRule"/>
</dbReference>
<dbReference type="GO" id="GO:0006434">
    <property type="term" value="P:seryl-tRNA aminoacylation"/>
    <property type="evidence" value="ECO:0007669"/>
    <property type="project" value="UniProtKB-UniRule"/>
</dbReference>
<dbReference type="CDD" id="cd00770">
    <property type="entry name" value="SerRS_core"/>
    <property type="match status" value="1"/>
</dbReference>
<dbReference type="FunFam" id="3.30.930.10:FF:000018">
    <property type="entry name" value="Serine--tRNA ligase"/>
    <property type="match status" value="1"/>
</dbReference>
<dbReference type="Gene3D" id="3.30.930.10">
    <property type="entry name" value="Bira Bifunctional Protein, Domain 2"/>
    <property type="match status" value="1"/>
</dbReference>
<dbReference type="Gene3D" id="1.10.287.40">
    <property type="entry name" value="Serine-tRNA synthetase, tRNA binding domain"/>
    <property type="match status" value="1"/>
</dbReference>
<dbReference type="HAMAP" id="MF_00176">
    <property type="entry name" value="Ser_tRNA_synth_type1"/>
    <property type="match status" value="1"/>
</dbReference>
<dbReference type="InterPro" id="IPR002314">
    <property type="entry name" value="aa-tRNA-synt_IIb"/>
</dbReference>
<dbReference type="InterPro" id="IPR006195">
    <property type="entry name" value="aa-tRNA-synth_II"/>
</dbReference>
<dbReference type="InterPro" id="IPR045864">
    <property type="entry name" value="aa-tRNA-synth_II/BPL/LPL"/>
</dbReference>
<dbReference type="InterPro" id="IPR002317">
    <property type="entry name" value="Ser-tRNA-ligase_type_1"/>
</dbReference>
<dbReference type="InterPro" id="IPR015866">
    <property type="entry name" value="Ser-tRNA-synth_1_N"/>
</dbReference>
<dbReference type="InterPro" id="IPR042103">
    <property type="entry name" value="SerRS_1_N_sf"/>
</dbReference>
<dbReference type="InterPro" id="IPR033729">
    <property type="entry name" value="SerRS_core"/>
</dbReference>
<dbReference type="InterPro" id="IPR010978">
    <property type="entry name" value="tRNA-bd_arm"/>
</dbReference>
<dbReference type="NCBIfam" id="TIGR00414">
    <property type="entry name" value="serS"/>
    <property type="match status" value="1"/>
</dbReference>
<dbReference type="PANTHER" id="PTHR43697:SF1">
    <property type="entry name" value="SERINE--TRNA LIGASE"/>
    <property type="match status" value="1"/>
</dbReference>
<dbReference type="PANTHER" id="PTHR43697">
    <property type="entry name" value="SERYL-TRNA SYNTHETASE"/>
    <property type="match status" value="1"/>
</dbReference>
<dbReference type="Pfam" id="PF02403">
    <property type="entry name" value="Seryl_tRNA_N"/>
    <property type="match status" value="1"/>
</dbReference>
<dbReference type="Pfam" id="PF00587">
    <property type="entry name" value="tRNA-synt_2b"/>
    <property type="match status" value="1"/>
</dbReference>
<dbReference type="PIRSF" id="PIRSF001529">
    <property type="entry name" value="Ser-tRNA-synth_IIa"/>
    <property type="match status" value="1"/>
</dbReference>
<dbReference type="PRINTS" id="PR00981">
    <property type="entry name" value="TRNASYNTHSER"/>
</dbReference>
<dbReference type="SUPFAM" id="SSF55681">
    <property type="entry name" value="Class II aaRS and biotin synthetases"/>
    <property type="match status" value="1"/>
</dbReference>
<dbReference type="SUPFAM" id="SSF46589">
    <property type="entry name" value="tRNA-binding arm"/>
    <property type="match status" value="1"/>
</dbReference>
<dbReference type="PROSITE" id="PS50862">
    <property type="entry name" value="AA_TRNA_LIGASE_II"/>
    <property type="match status" value="1"/>
</dbReference>
<keyword id="KW-0030">Aminoacyl-tRNA synthetase</keyword>
<keyword id="KW-0067">ATP-binding</keyword>
<keyword id="KW-0963">Cytoplasm</keyword>
<keyword id="KW-0436">Ligase</keyword>
<keyword id="KW-0547">Nucleotide-binding</keyword>
<keyword id="KW-0648">Protein biosynthesis</keyword>
<proteinExistence type="inferred from homology"/>
<gene>
    <name evidence="1" type="primary">serS</name>
    <name type="ordered locus">VV1325</name>
</gene>
<reference key="1">
    <citation type="journal article" date="2003" name="Genome Res.">
        <title>Comparative genome analysis of Vibrio vulnificus, a marine pathogen.</title>
        <authorList>
            <person name="Chen C.-Y."/>
            <person name="Wu K.-M."/>
            <person name="Chang Y.-C."/>
            <person name="Chang C.-H."/>
            <person name="Tsai H.-C."/>
            <person name="Liao T.-L."/>
            <person name="Liu Y.-M."/>
            <person name="Chen H.-J."/>
            <person name="Shen A.B.-T."/>
            <person name="Li J.-C."/>
            <person name="Su T.-L."/>
            <person name="Shao C.-P."/>
            <person name="Lee C.-T."/>
            <person name="Hor L.-I."/>
            <person name="Tsai S.-F."/>
        </authorList>
    </citation>
    <scope>NUCLEOTIDE SEQUENCE [LARGE SCALE GENOMIC DNA]</scope>
    <source>
        <strain>YJ016</strain>
    </source>
</reference>
<feature type="chain" id="PRO_0000122157" description="Serine--tRNA ligase">
    <location>
        <begin position="1"/>
        <end position="435"/>
    </location>
</feature>
<feature type="binding site" evidence="1">
    <location>
        <begin position="242"/>
        <end position="244"/>
    </location>
    <ligand>
        <name>L-serine</name>
        <dbReference type="ChEBI" id="CHEBI:33384"/>
    </ligand>
</feature>
<feature type="binding site" evidence="1">
    <location>
        <begin position="273"/>
        <end position="275"/>
    </location>
    <ligand>
        <name>ATP</name>
        <dbReference type="ChEBI" id="CHEBI:30616"/>
    </ligand>
</feature>
<feature type="binding site" evidence="1">
    <location>
        <position position="296"/>
    </location>
    <ligand>
        <name>L-serine</name>
        <dbReference type="ChEBI" id="CHEBI:33384"/>
    </ligand>
</feature>
<feature type="binding site" evidence="1">
    <location>
        <begin position="360"/>
        <end position="363"/>
    </location>
    <ligand>
        <name>ATP</name>
        <dbReference type="ChEBI" id="CHEBI:30616"/>
    </ligand>
</feature>
<feature type="binding site" evidence="1">
    <location>
        <position position="396"/>
    </location>
    <ligand>
        <name>L-serine</name>
        <dbReference type="ChEBI" id="CHEBI:33384"/>
    </ligand>
</feature>
<organism>
    <name type="scientific">Vibrio vulnificus (strain YJ016)</name>
    <dbReference type="NCBI Taxonomy" id="196600"/>
    <lineage>
        <taxon>Bacteria</taxon>
        <taxon>Pseudomonadati</taxon>
        <taxon>Pseudomonadota</taxon>
        <taxon>Gammaproteobacteria</taxon>
        <taxon>Vibrionales</taxon>
        <taxon>Vibrionaceae</taxon>
        <taxon>Vibrio</taxon>
    </lineage>
</organism>
<evidence type="ECO:0000255" key="1">
    <source>
        <dbReference type="HAMAP-Rule" id="MF_00176"/>
    </source>
</evidence>
<evidence type="ECO:0000305" key="2"/>